<organism>
    <name type="scientific">Caenorhabditis elegans</name>
    <dbReference type="NCBI Taxonomy" id="6239"/>
    <lineage>
        <taxon>Eukaryota</taxon>
        <taxon>Metazoa</taxon>
        <taxon>Ecdysozoa</taxon>
        <taxon>Nematoda</taxon>
        <taxon>Chromadorea</taxon>
        <taxon>Rhabditida</taxon>
        <taxon>Rhabditina</taxon>
        <taxon>Rhabditomorpha</taxon>
        <taxon>Rhabditoidea</taxon>
        <taxon>Rhabditidae</taxon>
        <taxon>Peloderinae</taxon>
        <taxon>Caenorhabditis</taxon>
    </lineage>
</organism>
<reference key="1">
    <citation type="journal article" date="1998" name="Science">
        <title>Genome sequence of the nematode C. elegans: a platform for investigating biology.</title>
        <authorList>
            <consortium name="The C. elegans sequencing consortium"/>
        </authorList>
    </citation>
    <scope>NUCLEOTIDE SEQUENCE [LARGE SCALE GENOMIC DNA]</scope>
    <source>
        <strain>Bristol N2</strain>
    </source>
</reference>
<reference key="2">
    <citation type="submission" date="2000-08" db="EMBL/GenBank/DDBJ databases">
        <title>The Caenorhabditis elegans transcriptome project, a complementary view of the genome.</title>
        <authorList>
            <person name="Kohara Y."/>
            <person name="Shin'i T."/>
            <person name="Suzuki Y."/>
            <person name="Sugano S."/>
            <person name="Potdevin M."/>
            <person name="Thierry-Mieg Y."/>
            <person name="Thierry-Mieg D."/>
            <person name="Thierry-Mieg J."/>
        </authorList>
    </citation>
    <scope>NUCLEOTIDE SEQUENCE [LARGE SCALE MRNA]</scope>
    <source>
        <strain>Bristol N2</strain>
    </source>
</reference>
<dbReference type="EMBL" id="BX284602">
    <property type="protein sequence ID" value="CAA85335.1"/>
    <property type="molecule type" value="Genomic_DNA"/>
</dbReference>
<dbReference type="EMBL" id="AF292050">
    <property type="protein sequence ID" value="AAG41146.1"/>
    <property type="molecule type" value="mRNA"/>
</dbReference>
<dbReference type="PIR" id="T24721">
    <property type="entry name" value="T24721"/>
</dbReference>
<dbReference type="RefSeq" id="NP_495651.1">
    <property type="nucleotide sequence ID" value="NM_063250.5"/>
</dbReference>
<dbReference type="SMR" id="P45967"/>
<dbReference type="BioGRID" id="39597">
    <property type="interactions" value="2"/>
</dbReference>
<dbReference type="FunCoup" id="P45967">
    <property type="interactions" value="3"/>
</dbReference>
<dbReference type="STRING" id="6239.T09A5.7.1"/>
<dbReference type="PaxDb" id="6239-T09A5.7"/>
<dbReference type="PeptideAtlas" id="P45967"/>
<dbReference type="EnsemblMetazoa" id="T09A5.7.1">
    <property type="protein sequence ID" value="T09A5.7.1"/>
    <property type="gene ID" value="WBGene00011635"/>
</dbReference>
<dbReference type="GeneID" id="174264"/>
<dbReference type="KEGG" id="cel:CELE_T09A5.7"/>
<dbReference type="UCSC" id="T09A5.7.1">
    <property type="organism name" value="c. elegans"/>
</dbReference>
<dbReference type="AGR" id="WB:WBGene00011635"/>
<dbReference type="CTD" id="174264"/>
<dbReference type="WormBase" id="T09A5.7">
    <property type="protein sequence ID" value="CE01088"/>
    <property type="gene ID" value="WBGene00011635"/>
    <property type="gene designation" value="mdmh-35"/>
</dbReference>
<dbReference type="eggNOG" id="KOG3481">
    <property type="taxonomic scope" value="Eukaryota"/>
</dbReference>
<dbReference type="GeneTree" id="ENSGT00940000176689"/>
<dbReference type="HOGENOM" id="CLU_2429549_0_0_1"/>
<dbReference type="InParanoid" id="P45967"/>
<dbReference type="OMA" id="RHMSSIF"/>
<dbReference type="OrthoDB" id="337270at2759"/>
<dbReference type="PhylomeDB" id="P45967"/>
<dbReference type="PRO" id="PR:P45967"/>
<dbReference type="Proteomes" id="UP000001940">
    <property type="component" value="Chromosome II"/>
</dbReference>
<dbReference type="Bgee" id="WBGene00011635">
    <property type="expression patterns" value="Expressed in germ line (C elegans) and 4 other cell types or tissues"/>
</dbReference>
<dbReference type="InterPro" id="IPR007918">
    <property type="entry name" value="MDM35_apoptosis"/>
</dbReference>
<dbReference type="Pfam" id="PF05254">
    <property type="entry name" value="UPF0203"/>
    <property type="match status" value="1"/>
</dbReference>
<dbReference type="PROSITE" id="PS51808">
    <property type="entry name" value="CHCH"/>
    <property type="match status" value="1"/>
</dbReference>
<feature type="chain" id="PRO_0000220528" description="Uncharacterized protein mdmh-35">
    <location>
        <begin position="1"/>
        <end position="103"/>
    </location>
</feature>
<feature type="domain" description="CHCH" evidence="1">
    <location>
        <begin position="10"/>
        <end position="63"/>
    </location>
</feature>
<feature type="region of interest" description="Disordered" evidence="2">
    <location>
        <begin position="80"/>
        <end position="103"/>
    </location>
</feature>
<feature type="short sequence motif" description="Cx9C motif 1" evidence="1">
    <location>
        <begin position="13"/>
        <end position="23"/>
    </location>
</feature>
<feature type="short sequence motif" description="Cx9C motif 2" evidence="1">
    <location>
        <begin position="45"/>
        <end position="55"/>
    </location>
</feature>
<feature type="compositionally biased region" description="Basic and acidic residues" evidence="2">
    <location>
        <begin position="80"/>
        <end position="90"/>
    </location>
</feature>
<feature type="compositionally biased region" description="Polar residues" evidence="2">
    <location>
        <begin position="91"/>
        <end position="103"/>
    </location>
</feature>
<feature type="disulfide bond" evidence="1">
    <location>
        <begin position="13"/>
        <end position="55"/>
    </location>
</feature>
<feature type="disulfide bond" evidence="1">
    <location>
        <begin position="23"/>
        <end position="45"/>
    </location>
</feature>
<evidence type="ECO:0000255" key="1">
    <source>
        <dbReference type="PROSITE-ProRule" id="PRU01150"/>
    </source>
</evidence>
<evidence type="ECO:0000256" key="2">
    <source>
        <dbReference type="SAM" id="MobiDB-lite"/>
    </source>
</evidence>
<evidence type="ECO:0000305" key="3"/>
<evidence type="ECO:0000312" key="4">
    <source>
        <dbReference type="WormBase" id="T09A5.7"/>
    </source>
</evidence>
<keyword id="KW-1015">Disulfide bond</keyword>
<keyword id="KW-1185">Reference proteome</keyword>
<proteinExistence type="inferred from homology"/>
<gene>
    <name evidence="4" type="primary">mdmh-35</name>
    <name evidence="4" type="ORF">T09A5.7</name>
</gene>
<accession>P45967</accession>
<sequence length="103" mass="12515">MSDRHMSSIFPECDHLKQIYDKCFTEFFQKFITPNYRHQYAVNPCERLHDVYKRCVEERLATQRPFEIDLDEIRKEYLNTDDDKLKDRQNNQKTNSENKCSSS</sequence>
<name>MIS35_CAEEL</name>
<protein>
    <recommendedName>
        <fullName evidence="3">Uncharacterized protein mdmh-35</fullName>
    </recommendedName>
    <alternativeName>
        <fullName evidence="4">Mitochondrial intermembrane space protein homolog 35</fullName>
    </alternativeName>
</protein>
<comment type="similarity">
    <text evidence="3">Belongs to the TRIAP1/MDM35 family.</text>
</comment>